<feature type="chain" id="PRO_1000130852" description="UDP-N-acetylmuramoylalanine--D-glutamate ligase">
    <location>
        <begin position="1"/>
        <end position="459"/>
    </location>
</feature>
<feature type="binding site" evidence="1">
    <location>
        <begin position="118"/>
        <end position="124"/>
    </location>
    <ligand>
        <name>ATP</name>
        <dbReference type="ChEBI" id="CHEBI:30616"/>
    </ligand>
</feature>
<accession>A8ZXW5</accession>
<reference key="1">
    <citation type="submission" date="2007-10" db="EMBL/GenBank/DDBJ databases">
        <title>Complete sequence of Desulfococcus oleovorans Hxd3.</title>
        <authorList>
            <consortium name="US DOE Joint Genome Institute"/>
            <person name="Copeland A."/>
            <person name="Lucas S."/>
            <person name="Lapidus A."/>
            <person name="Barry K."/>
            <person name="Glavina del Rio T."/>
            <person name="Dalin E."/>
            <person name="Tice H."/>
            <person name="Pitluck S."/>
            <person name="Kiss H."/>
            <person name="Brettin T."/>
            <person name="Bruce D."/>
            <person name="Detter J.C."/>
            <person name="Han C."/>
            <person name="Schmutz J."/>
            <person name="Larimer F."/>
            <person name="Land M."/>
            <person name="Hauser L."/>
            <person name="Kyrpides N."/>
            <person name="Kim E."/>
            <person name="Wawrik B."/>
            <person name="Richardson P."/>
        </authorList>
    </citation>
    <scope>NUCLEOTIDE SEQUENCE [LARGE SCALE GENOMIC DNA]</scope>
    <source>
        <strain>DSM 6200 / JCM 39069 / Hxd3</strain>
    </source>
</reference>
<organism>
    <name type="scientific">Desulfosudis oleivorans (strain DSM 6200 / JCM 39069 / Hxd3)</name>
    <name type="common">Desulfococcus oleovorans</name>
    <dbReference type="NCBI Taxonomy" id="96561"/>
    <lineage>
        <taxon>Bacteria</taxon>
        <taxon>Pseudomonadati</taxon>
        <taxon>Thermodesulfobacteriota</taxon>
        <taxon>Desulfobacteria</taxon>
        <taxon>Desulfobacterales</taxon>
        <taxon>Desulfosudaceae</taxon>
        <taxon>Desulfosudis</taxon>
    </lineage>
</organism>
<sequence>MKPVETENRKVVVVGLGKSGLATARFLLRRGALVTITDQASEARLGDLVVSARDLGATLELGGHQDSTFLSADYIVVSPGVPETLAPLKKAAEKGIPVMGEMELAARFVTKPVAAVTGTNGKTTVTTLLGDMLKASGRQVFVGGNIGAPLIGFADKGENADMAVVEVSSFQLDTSETFRPHVAVLLNIAEDHLARYVDFNAYVRSKGRIFENQEADDVAVINGADFHVLQASKGIRSRKLTFNAGKNTQDGAVIGDTAVEIVTAGTKTATISVTSPLMRARHNMENIAAATLAALAMGATVEGIQAAVDGFQGLRHRLEYVASIDDVHYFDDSKATNPDAVRRALEFFTSRVVLLLGGEDKGCDYGVLKNVIRERARAVVLFGAAKEKIRMAINGSVSLWDAGSMAEAVRRAHELAAPGDAVLLSPACSSFDSYESYAHRGDDFCNAVKKLKEGDHARG</sequence>
<protein>
    <recommendedName>
        <fullName evidence="1">UDP-N-acetylmuramoylalanine--D-glutamate ligase</fullName>
        <ecNumber evidence="1">6.3.2.9</ecNumber>
    </recommendedName>
    <alternativeName>
        <fullName evidence="1">D-glutamic acid-adding enzyme</fullName>
    </alternativeName>
    <alternativeName>
        <fullName evidence="1">UDP-N-acetylmuramoyl-L-alanyl-D-glutamate synthetase</fullName>
    </alternativeName>
</protein>
<name>MURD_DESOH</name>
<dbReference type="EC" id="6.3.2.9" evidence="1"/>
<dbReference type="EMBL" id="CP000859">
    <property type="protein sequence ID" value="ABW68592.1"/>
    <property type="molecule type" value="Genomic_DNA"/>
</dbReference>
<dbReference type="RefSeq" id="WP_012176203.1">
    <property type="nucleotide sequence ID" value="NC_009943.1"/>
</dbReference>
<dbReference type="SMR" id="A8ZXW5"/>
<dbReference type="STRING" id="96561.Dole_2789"/>
<dbReference type="KEGG" id="dol:Dole_2789"/>
<dbReference type="eggNOG" id="COG0771">
    <property type="taxonomic scope" value="Bacteria"/>
</dbReference>
<dbReference type="HOGENOM" id="CLU_032540_0_0_7"/>
<dbReference type="OrthoDB" id="9809796at2"/>
<dbReference type="UniPathway" id="UPA00219"/>
<dbReference type="Proteomes" id="UP000008561">
    <property type="component" value="Chromosome"/>
</dbReference>
<dbReference type="GO" id="GO:0005737">
    <property type="term" value="C:cytoplasm"/>
    <property type="evidence" value="ECO:0007669"/>
    <property type="project" value="UniProtKB-SubCell"/>
</dbReference>
<dbReference type="GO" id="GO:0005524">
    <property type="term" value="F:ATP binding"/>
    <property type="evidence" value="ECO:0007669"/>
    <property type="project" value="UniProtKB-UniRule"/>
</dbReference>
<dbReference type="GO" id="GO:0008764">
    <property type="term" value="F:UDP-N-acetylmuramoylalanine-D-glutamate ligase activity"/>
    <property type="evidence" value="ECO:0007669"/>
    <property type="project" value="UniProtKB-UniRule"/>
</dbReference>
<dbReference type="GO" id="GO:0051301">
    <property type="term" value="P:cell division"/>
    <property type="evidence" value="ECO:0007669"/>
    <property type="project" value="UniProtKB-KW"/>
</dbReference>
<dbReference type="GO" id="GO:0071555">
    <property type="term" value="P:cell wall organization"/>
    <property type="evidence" value="ECO:0007669"/>
    <property type="project" value="UniProtKB-KW"/>
</dbReference>
<dbReference type="GO" id="GO:0009252">
    <property type="term" value="P:peptidoglycan biosynthetic process"/>
    <property type="evidence" value="ECO:0007669"/>
    <property type="project" value="UniProtKB-UniRule"/>
</dbReference>
<dbReference type="GO" id="GO:0008360">
    <property type="term" value="P:regulation of cell shape"/>
    <property type="evidence" value="ECO:0007669"/>
    <property type="project" value="UniProtKB-KW"/>
</dbReference>
<dbReference type="Gene3D" id="3.90.190.20">
    <property type="entry name" value="Mur ligase, C-terminal domain"/>
    <property type="match status" value="1"/>
</dbReference>
<dbReference type="Gene3D" id="3.40.1190.10">
    <property type="entry name" value="Mur-like, catalytic domain"/>
    <property type="match status" value="1"/>
</dbReference>
<dbReference type="Gene3D" id="3.40.50.720">
    <property type="entry name" value="NAD(P)-binding Rossmann-like Domain"/>
    <property type="match status" value="1"/>
</dbReference>
<dbReference type="HAMAP" id="MF_00639">
    <property type="entry name" value="MurD"/>
    <property type="match status" value="1"/>
</dbReference>
<dbReference type="InterPro" id="IPR036565">
    <property type="entry name" value="Mur-like_cat_sf"/>
</dbReference>
<dbReference type="InterPro" id="IPR004101">
    <property type="entry name" value="Mur_ligase_C"/>
</dbReference>
<dbReference type="InterPro" id="IPR036615">
    <property type="entry name" value="Mur_ligase_C_dom_sf"/>
</dbReference>
<dbReference type="InterPro" id="IPR013221">
    <property type="entry name" value="Mur_ligase_cen"/>
</dbReference>
<dbReference type="InterPro" id="IPR005762">
    <property type="entry name" value="MurD"/>
</dbReference>
<dbReference type="NCBIfam" id="TIGR01087">
    <property type="entry name" value="murD"/>
    <property type="match status" value="1"/>
</dbReference>
<dbReference type="PANTHER" id="PTHR43692">
    <property type="entry name" value="UDP-N-ACETYLMURAMOYLALANINE--D-GLUTAMATE LIGASE"/>
    <property type="match status" value="1"/>
</dbReference>
<dbReference type="PANTHER" id="PTHR43692:SF1">
    <property type="entry name" value="UDP-N-ACETYLMURAMOYLALANINE--D-GLUTAMATE LIGASE"/>
    <property type="match status" value="1"/>
</dbReference>
<dbReference type="Pfam" id="PF02875">
    <property type="entry name" value="Mur_ligase_C"/>
    <property type="match status" value="1"/>
</dbReference>
<dbReference type="Pfam" id="PF08245">
    <property type="entry name" value="Mur_ligase_M"/>
    <property type="match status" value="1"/>
</dbReference>
<dbReference type="Pfam" id="PF21799">
    <property type="entry name" value="MurD-like_N"/>
    <property type="match status" value="1"/>
</dbReference>
<dbReference type="SUPFAM" id="SSF51984">
    <property type="entry name" value="MurCD N-terminal domain"/>
    <property type="match status" value="1"/>
</dbReference>
<dbReference type="SUPFAM" id="SSF53623">
    <property type="entry name" value="MurD-like peptide ligases, catalytic domain"/>
    <property type="match status" value="1"/>
</dbReference>
<dbReference type="SUPFAM" id="SSF53244">
    <property type="entry name" value="MurD-like peptide ligases, peptide-binding domain"/>
    <property type="match status" value="1"/>
</dbReference>
<gene>
    <name evidence="1" type="primary">murD</name>
    <name type="ordered locus">Dole_2789</name>
</gene>
<keyword id="KW-0067">ATP-binding</keyword>
<keyword id="KW-0131">Cell cycle</keyword>
<keyword id="KW-0132">Cell division</keyword>
<keyword id="KW-0133">Cell shape</keyword>
<keyword id="KW-0961">Cell wall biogenesis/degradation</keyword>
<keyword id="KW-0963">Cytoplasm</keyword>
<keyword id="KW-0436">Ligase</keyword>
<keyword id="KW-0547">Nucleotide-binding</keyword>
<keyword id="KW-0573">Peptidoglycan synthesis</keyword>
<keyword id="KW-1185">Reference proteome</keyword>
<evidence type="ECO:0000255" key="1">
    <source>
        <dbReference type="HAMAP-Rule" id="MF_00639"/>
    </source>
</evidence>
<comment type="function">
    <text evidence="1">Cell wall formation. Catalyzes the addition of glutamate to the nucleotide precursor UDP-N-acetylmuramoyl-L-alanine (UMA).</text>
</comment>
<comment type="catalytic activity">
    <reaction evidence="1">
        <text>UDP-N-acetyl-alpha-D-muramoyl-L-alanine + D-glutamate + ATP = UDP-N-acetyl-alpha-D-muramoyl-L-alanyl-D-glutamate + ADP + phosphate + H(+)</text>
        <dbReference type="Rhea" id="RHEA:16429"/>
        <dbReference type="ChEBI" id="CHEBI:15378"/>
        <dbReference type="ChEBI" id="CHEBI:29986"/>
        <dbReference type="ChEBI" id="CHEBI:30616"/>
        <dbReference type="ChEBI" id="CHEBI:43474"/>
        <dbReference type="ChEBI" id="CHEBI:83898"/>
        <dbReference type="ChEBI" id="CHEBI:83900"/>
        <dbReference type="ChEBI" id="CHEBI:456216"/>
        <dbReference type="EC" id="6.3.2.9"/>
    </reaction>
</comment>
<comment type="pathway">
    <text evidence="1">Cell wall biogenesis; peptidoglycan biosynthesis.</text>
</comment>
<comment type="subcellular location">
    <subcellularLocation>
        <location evidence="1">Cytoplasm</location>
    </subcellularLocation>
</comment>
<comment type="similarity">
    <text evidence="1">Belongs to the MurCDEF family.</text>
</comment>
<proteinExistence type="inferred from homology"/>